<evidence type="ECO:0000255" key="1">
    <source>
        <dbReference type="HAMAP-Rule" id="MF_01320"/>
    </source>
</evidence>
<evidence type="ECO:0000256" key="2">
    <source>
        <dbReference type="SAM" id="MobiDB-lite"/>
    </source>
</evidence>
<evidence type="ECO:0000305" key="3"/>
<name>RL2_SALPB</name>
<proteinExistence type="inferred from homology"/>
<reference key="1">
    <citation type="submission" date="2007-11" db="EMBL/GenBank/DDBJ databases">
        <authorList>
            <consortium name="The Salmonella enterica serovar Paratyphi B Genome Sequencing Project"/>
            <person name="McClelland M."/>
            <person name="Sanderson E.K."/>
            <person name="Porwollik S."/>
            <person name="Spieth J."/>
            <person name="Clifton W.S."/>
            <person name="Fulton R."/>
            <person name="Cordes M."/>
            <person name="Wollam A."/>
            <person name="Shah N."/>
            <person name="Pepin K."/>
            <person name="Bhonagiri V."/>
            <person name="Nash W."/>
            <person name="Johnson M."/>
            <person name="Thiruvilangam P."/>
            <person name="Wilson R."/>
        </authorList>
    </citation>
    <scope>NUCLEOTIDE SEQUENCE [LARGE SCALE GENOMIC DNA]</scope>
    <source>
        <strain>ATCC BAA-1250 / SPB7</strain>
    </source>
</reference>
<accession>A9MSZ5</accession>
<dbReference type="EMBL" id="CP000886">
    <property type="protein sequence ID" value="ABX69595.1"/>
    <property type="molecule type" value="Genomic_DNA"/>
</dbReference>
<dbReference type="RefSeq" id="WP_000301869.1">
    <property type="nucleotide sequence ID" value="NC_010102.1"/>
</dbReference>
<dbReference type="SMR" id="A9MSZ5"/>
<dbReference type="GeneID" id="97393170"/>
<dbReference type="KEGG" id="spq:SPAB_04278"/>
<dbReference type="PATRIC" id="fig|1016998.12.peg.4024"/>
<dbReference type="HOGENOM" id="CLU_036235_2_1_6"/>
<dbReference type="BioCyc" id="SENT1016998:SPAB_RS17420-MONOMER"/>
<dbReference type="Proteomes" id="UP000008556">
    <property type="component" value="Chromosome"/>
</dbReference>
<dbReference type="GO" id="GO:0005829">
    <property type="term" value="C:cytosol"/>
    <property type="evidence" value="ECO:0007669"/>
    <property type="project" value="UniProtKB-ARBA"/>
</dbReference>
<dbReference type="GO" id="GO:0015934">
    <property type="term" value="C:large ribosomal subunit"/>
    <property type="evidence" value="ECO:0007669"/>
    <property type="project" value="InterPro"/>
</dbReference>
<dbReference type="GO" id="GO:0019843">
    <property type="term" value="F:rRNA binding"/>
    <property type="evidence" value="ECO:0007669"/>
    <property type="project" value="UniProtKB-UniRule"/>
</dbReference>
<dbReference type="GO" id="GO:0003735">
    <property type="term" value="F:structural constituent of ribosome"/>
    <property type="evidence" value="ECO:0007669"/>
    <property type="project" value="InterPro"/>
</dbReference>
<dbReference type="GO" id="GO:0016740">
    <property type="term" value="F:transferase activity"/>
    <property type="evidence" value="ECO:0007669"/>
    <property type="project" value="InterPro"/>
</dbReference>
<dbReference type="GO" id="GO:0002181">
    <property type="term" value="P:cytoplasmic translation"/>
    <property type="evidence" value="ECO:0007669"/>
    <property type="project" value="TreeGrafter"/>
</dbReference>
<dbReference type="FunFam" id="2.30.30.30:FF:000001">
    <property type="entry name" value="50S ribosomal protein L2"/>
    <property type="match status" value="1"/>
</dbReference>
<dbReference type="FunFam" id="2.40.50.140:FF:000003">
    <property type="entry name" value="50S ribosomal protein L2"/>
    <property type="match status" value="1"/>
</dbReference>
<dbReference type="FunFam" id="4.10.950.10:FF:000001">
    <property type="entry name" value="50S ribosomal protein L2"/>
    <property type="match status" value="1"/>
</dbReference>
<dbReference type="Gene3D" id="2.30.30.30">
    <property type="match status" value="1"/>
</dbReference>
<dbReference type="Gene3D" id="2.40.50.140">
    <property type="entry name" value="Nucleic acid-binding proteins"/>
    <property type="match status" value="1"/>
</dbReference>
<dbReference type="Gene3D" id="4.10.950.10">
    <property type="entry name" value="Ribosomal protein L2, domain 3"/>
    <property type="match status" value="1"/>
</dbReference>
<dbReference type="HAMAP" id="MF_01320_B">
    <property type="entry name" value="Ribosomal_uL2_B"/>
    <property type="match status" value="1"/>
</dbReference>
<dbReference type="InterPro" id="IPR012340">
    <property type="entry name" value="NA-bd_OB-fold"/>
</dbReference>
<dbReference type="InterPro" id="IPR014722">
    <property type="entry name" value="Rib_uL2_dom2"/>
</dbReference>
<dbReference type="InterPro" id="IPR002171">
    <property type="entry name" value="Ribosomal_uL2"/>
</dbReference>
<dbReference type="InterPro" id="IPR005880">
    <property type="entry name" value="Ribosomal_uL2_bac/org-type"/>
</dbReference>
<dbReference type="InterPro" id="IPR022669">
    <property type="entry name" value="Ribosomal_uL2_C"/>
</dbReference>
<dbReference type="InterPro" id="IPR022671">
    <property type="entry name" value="Ribosomal_uL2_CS"/>
</dbReference>
<dbReference type="InterPro" id="IPR014726">
    <property type="entry name" value="Ribosomal_uL2_dom3"/>
</dbReference>
<dbReference type="InterPro" id="IPR022666">
    <property type="entry name" value="Ribosomal_uL2_RNA-bd_dom"/>
</dbReference>
<dbReference type="InterPro" id="IPR008991">
    <property type="entry name" value="Translation_prot_SH3-like_sf"/>
</dbReference>
<dbReference type="NCBIfam" id="TIGR01171">
    <property type="entry name" value="rplB_bact"/>
    <property type="match status" value="1"/>
</dbReference>
<dbReference type="PANTHER" id="PTHR13691:SF5">
    <property type="entry name" value="LARGE RIBOSOMAL SUBUNIT PROTEIN UL2M"/>
    <property type="match status" value="1"/>
</dbReference>
<dbReference type="PANTHER" id="PTHR13691">
    <property type="entry name" value="RIBOSOMAL PROTEIN L2"/>
    <property type="match status" value="1"/>
</dbReference>
<dbReference type="Pfam" id="PF00181">
    <property type="entry name" value="Ribosomal_L2"/>
    <property type="match status" value="1"/>
</dbReference>
<dbReference type="Pfam" id="PF03947">
    <property type="entry name" value="Ribosomal_L2_C"/>
    <property type="match status" value="1"/>
</dbReference>
<dbReference type="PIRSF" id="PIRSF002158">
    <property type="entry name" value="Ribosomal_L2"/>
    <property type="match status" value="1"/>
</dbReference>
<dbReference type="SMART" id="SM01383">
    <property type="entry name" value="Ribosomal_L2"/>
    <property type="match status" value="1"/>
</dbReference>
<dbReference type="SMART" id="SM01382">
    <property type="entry name" value="Ribosomal_L2_C"/>
    <property type="match status" value="1"/>
</dbReference>
<dbReference type="SUPFAM" id="SSF50249">
    <property type="entry name" value="Nucleic acid-binding proteins"/>
    <property type="match status" value="1"/>
</dbReference>
<dbReference type="SUPFAM" id="SSF50104">
    <property type="entry name" value="Translation proteins SH3-like domain"/>
    <property type="match status" value="1"/>
</dbReference>
<dbReference type="PROSITE" id="PS00467">
    <property type="entry name" value="RIBOSOMAL_L2"/>
    <property type="match status" value="1"/>
</dbReference>
<feature type="chain" id="PRO_1000086349" description="Large ribosomal subunit protein uL2">
    <location>
        <begin position="1"/>
        <end position="273"/>
    </location>
</feature>
<feature type="region of interest" description="Disordered" evidence="2">
    <location>
        <begin position="28"/>
        <end position="53"/>
    </location>
</feature>
<feature type="region of interest" description="Disordered" evidence="2">
    <location>
        <begin position="221"/>
        <end position="273"/>
    </location>
</feature>
<feature type="compositionally biased region" description="Low complexity" evidence="2">
    <location>
        <begin position="39"/>
        <end position="48"/>
    </location>
</feature>
<protein>
    <recommendedName>
        <fullName evidence="1">Large ribosomal subunit protein uL2</fullName>
    </recommendedName>
    <alternativeName>
        <fullName evidence="3">50S ribosomal protein L2</fullName>
    </alternativeName>
</protein>
<organism>
    <name type="scientific">Salmonella paratyphi B (strain ATCC BAA-1250 / SPB7)</name>
    <dbReference type="NCBI Taxonomy" id="1016998"/>
    <lineage>
        <taxon>Bacteria</taxon>
        <taxon>Pseudomonadati</taxon>
        <taxon>Pseudomonadota</taxon>
        <taxon>Gammaproteobacteria</taxon>
        <taxon>Enterobacterales</taxon>
        <taxon>Enterobacteriaceae</taxon>
        <taxon>Salmonella</taxon>
    </lineage>
</organism>
<gene>
    <name evidence="1" type="primary">rplB</name>
    <name type="ordered locus">SPAB_04278</name>
</gene>
<keyword id="KW-0687">Ribonucleoprotein</keyword>
<keyword id="KW-0689">Ribosomal protein</keyword>
<keyword id="KW-0694">RNA-binding</keyword>
<keyword id="KW-0699">rRNA-binding</keyword>
<comment type="function">
    <text evidence="1">One of the primary rRNA binding proteins. Required for association of the 30S and 50S subunits to form the 70S ribosome, for tRNA binding and peptide bond formation. It has been suggested to have peptidyltransferase activity; this is somewhat controversial. Makes several contacts with the 16S rRNA in the 70S ribosome.</text>
</comment>
<comment type="subunit">
    <text evidence="1">Part of the 50S ribosomal subunit. Forms a bridge to the 30S subunit in the 70S ribosome.</text>
</comment>
<comment type="similarity">
    <text evidence="1">Belongs to the universal ribosomal protein uL2 family.</text>
</comment>
<sequence>MAVVKCKPTSPGRRHVVKVVNPELHKGKPFAPLVEKNSKSGGRNNNGRITTRHIGGGHKQAYRIVDFKRNKDGIPAVVERLEYDPNRSANIALVLYKDGERRYILAPKGLKAGDQIQSGVDAAIKAGNTLPMRNIPVGSTVHNVEMKPGKGGQLARSAGTYVQIVARDGAYVTLRLRSGEMRKVEADCRATLGEVGNAEHMLRVLGKAGAARWRGVRPTVRGTAMNPVDHPHGGGEGRNFGKHPVTPWGVQTKGKKTRSNKRTDKFIVRRRSK</sequence>